<proteinExistence type="evidence at protein level"/>
<dbReference type="EC" id="3.1.1.5" evidence="1"/>
<dbReference type="EMBL" id="U59710">
    <property type="protein sequence ID" value="AAC61890.1"/>
    <property type="molecule type" value="Genomic_DNA"/>
</dbReference>
<dbReference type="EMBL" id="AF045558">
    <property type="protein sequence ID" value="AAC72296.1"/>
    <property type="molecule type" value="Genomic_DNA"/>
</dbReference>
<dbReference type="EMBL" id="CP017628">
    <property type="protein sequence ID" value="AOW30135.1"/>
    <property type="molecule type" value="Genomic_DNA"/>
</dbReference>
<dbReference type="RefSeq" id="XP_713822.1">
    <property type="nucleotide sequence ID" value="XM_708729.2"/>
</dbReference>
<dbReference type="SMR" id="Q9UWF6"/>
<dbReference type="STRING" id="237561.Q9UWF6"/>
<dbReference type="GlyCosmos" id="Q9UWF6">
    <property type="glycosylation" value="7 sites, No reported glycans"/>
</dbReference>
<dbReference type="EnsemblFungi" id="C6_01990W_A-T">
    <property type="protein sequence ID" value="C6_01990W_A-T-p1"/>
    <property type="gene ID" value="C6_01990W_A"/>
</dbReference>
<dbReference type="GeneID" id="3644561"/>
<dbReference type="KEGG" id="cal:CAALFM_C601990WA"/>
<dbReference type="CGD" id="CAL0000177213">
    <property type="gene designation" value="PLB1"/>
</dbReference>
<dbReference type="VEuPathDB" id="FungiDB:C6_01990W_A"/>
<dbReference type="eggNOG" id="KOG1325">
    <property type="taxonomic scope" value="Eukaryota"/>
</dbReference>
<dbReference type="HOGENOM" id="CLU_014602_0_0_1"/>
<dbReference type="InParanoid" id="Q9UWF6"/>
<dbReference type="OMA" id="FGHINMS"/>
<dbReference type="OrthoDB" id="4084751at2759"/>
<dbReference type="PHI-base" id="PHI:105"/>
<dbReference type="PHI-base" id="PHI:7565"/>
<dbReference type="Proteomes" id="UP000000559">
    <property type="component" value="Chromosome 6"/>
</dbReference>
<dbReference type="GO" id="GO:0005829">
    <property type="term" value="C:cytosol"/>
    <property type="evidence" value="ECO:0000318"/>
    <property type="project" value="GO_Central"/>
</dbReference>
<dbReference type="GO" id="GO:0005783">
    <property type="term" value="C:endoplasmic reticulum"/>
    <property type="evidence" value="ECO:0000318"/>
    <property type="project" value="GO_Central"/>
</dbReference>
<dbReference type="GO" id="GO:0005576">
    <property type="term" value="C:extracellular region"/>
    <property type="evidence" value="ECO:0000314"/>
    <property type="project" value="CGD"/>
</dbReference>
<dbReference type="GO" id="GO:1903561">
    <property type="term" value="C:extracellular vesicle"/>
    <property type="evidence" value="ECO:0000314"/>
    <property type="project" value="CGD"/>
</dbReference>
<dbReference type="GO" id="GO:0005886">
    <property type="term" value="C:plasma membrane"/>
    <property type="evidence" value="ECO:0000318"/>
    <property type="project" value="GO_Central"/>
</dbReference>
<dbReference type="GO" id="GO:0004622">
    <property type="term" value="F:lysophospholipase activity"/>
    <property type="evidence" value="ECO:0000314"/>
    <property type="project" value="CGD"/>
</dbReference>
<dbReference type="GO" id="GO:0004623">
    <property type="term" value="F:phospholipase A2 activity"/>
    <property type="evidence" value="ECO:0000318"/>
    <property type="project" value="GO_Central"/>
</dbReference>
<dbReference type="GO" id="GO:0046475">
    <property type="term" value="P:glycerophospholipid catabolic process"/>
    <property type="evidence" value="ECO:0000318"/>
    <property type="project" value="GO_Central"/>
</dbReference>
<dbReference type="GO" id="GO:0044001">
    <property type="term" value="P:migration in host"/>
    <property type="evidence" value="ECO:0000315"/>
    <property type="project" value="CGD"/>
</dbReference>
<dbReference type="CDD" id="cd07203">
    <property type="entry name" value="cPLA2_Fungal_PLB"/>
    <property type="match status" value="1"/>
</dbReference>
<dbReference type="FunFam" id="3.40.1090.10:FF:000010">
    <property type="entry name" value="Lysophospholipase"/>
    <property type="match status" value="1"/>
</dbReference>
<dbReference type="Gene3D" id="3.40.1090.10">
    <property type="entry name" value="Cytosolic phospholipase A2 catalytic domain"/>
    <property type="match status" value="1"/>
</dbReference>
<dbReference type="InterPro" id="IPR016035">
    <property type="entry name" value="Acyl_Trfase/lysoPLipase"/>
</dbReference>
<dbReference type="InterPro" id="IPR002642">
    <property type="entry name" value="LysoPLipase_cat_dom"/>
</dbReference>
<dbReference type="PANTHER" id="PTHR10728">
    <property type="entry name" value="CYTOSOLIC PHOSPHOLIPASE A2"/>
    <property type="match status" value="1"/>
</dbReference>
<dbReference type="PANTHER" id="PTHR10728:SF33">
    <property type="entry name" value="LYSOPHOSPHOLIPASE 1-RELATED"/>
    <property type="match status" value="1"/>
</dbReference>
<dbReference type="Pfam" id="PF01735">
    <property type="entry name" value="PLA2_B"/>
    <property type="match status" value="1"/>
</dbReference>
<dbReference type="SMART" id="SM00022">
    <property type="entry name" value="PLAc"/>
    <property type="match status" value="1"/>
</dbReference>
<dbReference type="SUPFAM" id="SSF52151">
    <property type="entry name" value="FabD/lysophospholipase-like"/>
    <property type="match status" value="1"/>
</dbReference>
<dbReference type="PROSITE" id="PS51210">
    <property type="entry name" value="PLA2C"/>
    <property type="match status" value="1"/>
</dbReference>
<sequence length="605" mass="66417">MILHHLLILLIINYCVATSPTNGYAPGPVSCPSSQLIRSGSQGINPNEQSYINARYPIAKQALSKFLHNANLQNFDVDSFLAHSNPTIGLAFSGGGYRAMLTGAGEISSLDSRTKTNTPVLAGILQASSYIAGLSGGSWLVGSLASNNLNSVDDMLSQGLWELTHSFLSYYGIEHPIKQVEEWVNVGNQVASKRNANFNVSLTDIYGRLLSYPLLTNTEDEGDAYLWSDVTSASNFQSHQMPFPILISDGRAPDTTIINLNSTVIELTPYEFGSWDPSLNEFVDTRYLGTKLDNGRPTGKCYNGFDNAGFFMGTSSALFNEAVLSITEANIPSFLKDIIDDILVDPILKSNIDVSAYNPNPFFKSSGSNTAISQSKNLYLVDGGEDGQNIPISPLLHRNVSAIFAFDNSNDVLNWPDGTSLVKTYERQFSSQGNGIAFPYVPDQYTFRNLNLTSKPTFFGCDAKNLTSLTKDIYDVPLVIYLANRPFTYWSNTSTFKLTYDDNERQGMISNGFEIATRSSGSLDDEWAACVGCAIIRREQERQGIEQTEQCKRCFENYCWDGTIYKGEPLGENFSDDGLTNSATEYNSNNVAGFNDGGTSILKKA</sequence>
<comment type="function">
    <text evidence="1 4">Catalyzes the release of fatty acids from lysophospholipids (By similarity). Phospholipase B may well contribute to pathogenicity by abetting the fungus in damaging and traversing host cell membranes, processes which likely increase the rapidity of disseminated infection (PubMed:9748287).</text>
</comment>
<comment type="catalytic activity">
    <reaction evidence="1">
        <text>a 1-acyl-sn-glycero-3-phosphocholine + H2O = sn-glycerol 3-phosphocholine + a fatty acid + H(+)</text>
        <dbReference type="Rhea" id="RHEA:15177"/>
        <dbReference type="ChEBI" id="CHEBI:15377"/>
        <dbReference type="ChEBI" id="CHEBI:15378"/>
        <dbReference type="ChEBI" id="CHEBI:16870"/>
        <dbReference type="ChEBI" id="CHEBI:28868"/>
        <dbReference type="ChEBI" id="CHEBI:58168"/>
        <dbReference type="EC" id="3.1.1.5"/>
    </reaction>
</comment>
<comment type="subcellular location">
    <subcellularLocation>
        <location evidence="6">Secreted</location>
    </subcellularLocation>
</comment>
<comment type="induction">
    <text evidence="4">Expressed during candidal infection of mice.</text>
</comment>
<comment type="disruption phenotype">
    <text evidence="4">Reduces dramatically the ability to penetrate host cells.</text>
</comment>
<comment type="similarity">
    <text evidence="6">Belongs to the lysophospholipase family.</text>
</comment>
<name>PLB1_CANAL</name>
<feature type="signal peptide" evidence="2">
    <location>
        <begin position="1"/>
        <end position="17"/>
    </location>
</feature>
<feature type="chain" id="PRO_0000024630" description="Lysophospholipase 1">
    <location>
        <begin position="18"/>
        <end position="605"/>
    </location>
</feature>
<feature type="domain" description="PLA2c" evidence="3">
    <location>
        <begin position="30"/>
        <end position="565"/>
    </location>
</feature>
<feature type="glycosylation site" description="N-linked (GlcNAc...) asparagine" evidence="2">
    <location>
        <position position="199"/>
    </location>
</feature>
<feature type="glycosylation site" description="N-linked (GlcNAc...) asparagine" evidence="2">
    <location>
        <position position="261"/>
    </location>
</feature>
<feature type="glycosylation site" description="N-linked (GlcNAc...) asparagine" evidence="2">
    <location>
        <position position="399"/>
    </location>
</feature>
<feature type="glycosylation site" description="N-linked (GlcNAc...) asparagine" evidence="2">
    <location>
        <position position="451"/>
    </location>
</feature>
<feature type="glycosylation site" description="N-linked (GlcNAc...) asparagine" evidence="2">
    <location>
        <position position="465"/>
    </location>
</feature>
<feature type="glycosylation site" description="N-linked (GlcNAc...) asparagine" evidence="2">
    <location>
        <position position="492"/>
    </location>
</feature>
<feature type="glycosylation site" description="N-linked (GlcNAc...) asparagine" evidence="2">
    <location>
        <position position="573"/>
    </location>
</feature>
<feature type="sequence conflict" description="In Ref. 2; AAC72296." evidence="6" ref="2">
    <original>K</original>
    <variation>N</variation>
    <location>
        <position position="471"/>
    </location>
</feature>
<accession>Q9UWF6</accession>
<accession>A0A1D8PPS3</accession>
<accession>O74207</accession>
<accession>Q59W35</accession>
<keyword id="KW-0903">Direct protein sequencing</keyword>
<keyword id="KW-0325">Glycoprotein</keyword>
<keyword id="KW-0378">Hydrolase</keyword>
<keyword id="KW-0442">Lipid degradation</keyword>
<keyword id="KW-0443">Lipid metabolism</keyword>
<keyword id="KW-1185">Reference proteome</keyword>
<keyword id="KW-0964">Secreted</keyword>
<keyword id="KW-0732">Signal</keyword>
<protein>
    <recommendedName>
        <fullName>Lysophospholipase 1</fullName>
        <ecNumber evidence="1">3.1.1.5</ecNumber>
    </recommendedName>
    <alternativeName>
        <fullName>CaPLB1</fullName>
    </alternativeName>
    <alternativeName>
        <fullName>Phospholipase B 1</fullName>
    </alternativeName>
</protein>
<reference key="1">
    <citation type="journal article" date="1998" name="J. Biol. Chem.">
        <title>Cloning and disruption of caPLB1, a phospholipase B gene involved in the pathogenicity of Candida albicans.</title>
        <authorList>
            <person name="Leidich S.D."/>
            <person name="Ibrahim A.S."/>
            <person name="Fu Y."/>
            <person name="Koul A."/>
            <person name="Jessup C."/>
            <person name="Vitullo J."/>
            <person name="Fonzi W."/>
            <person name="Mirbod F."/>
            <person name="Nakashima S."/>
            <person name="Nozawa Y."/>
            <person name="Ghannoum M.A."/>
        </authorList>
    </citation>
    <scope>NUCLEOTIDE SEQUENCE [GENOMIC DNA]</scope>
    <scope>PARTIAL PROTEIN SEQUENCE</scope>
    <scope>FUNCTION</scope>
    <scope>DISRUPTION PHENOTYPE</scope>
    <scope>INDUCTION</scope>
    <source>
        <strain>SC5314 / ATCC MYA-2876</strain>
    </source>
</reference>
<reference key="2">
    <citation type="journal article" date="1998" name="FEMS Microbiol. Lett.">
        <title>Cloning and regulated expression of the Candida albicans phospholipase B (PLB1) gene.</title>
        <authorList>
            <person name="Hoover C.I."/>
            <person name="Jantapour M.J."/>
            <person name="Newport G."/>
            <person name="Agabian N."/>
            <person name="Fisher S.J."/>
        </authorList>
    </citation>
    <scope>NUCLEOTIDE SEQUENCE [GENOMIC DNA]</scope>
    <source>
        <strain>SS</strain>
    </source>
</reference>
<reference key="3">
    <citation type="journal article" date="2004" name="Proc. Natl. Acad. Sci. U.S.A.">
        <title>The diploid genome sequence of Candida albicans.</title>
        <authorList>
            <person name="Jones T."/>
            <person name="Federspiel N.A."/>
            <person name="Chibana H."/>
            <person name="Dungan J."/>
            <person name="Kalman S."/>
            <person name="Magee B.B."/>
            <person name="Newport G."/>
            <person name="Thorstenson Y.R."/>
            <person name="Agabian N."/>
            <person name="Magee P.T."/>
            <person name="Davis R.W."/>
            <person name="Scherer S."/>
        </authorList>
    </citation>
    <scope>NUCLEOTIDE SEQUENCE [LARGE SCALE GENOMIC DNA]</scope>
    <source>
        <strain>SC5314 / ATCC MYA-2876</strain>
    </source>
</reference>
<reference key="4">
    <citation type="journal article" date="2007" name="Genome Biol.">
        <title>Assembly of the Candida albicans genome into sixteen supercontigs aligned on the eight chromosomes.</title>
        <authorList>
            <person name="van het Hoog M."/>
            <person name="Rast T.J."/>
            <person name="Martchenko M."/>
            <person name="Grindle S."/>
            <person name="Dignard D."/>
            <person name="Hogues H."/>
            <person name="Cuomo C."/>
            <person name="Berriman M."/>
            <person name="Scherer S."/>
            <person name="Magee B.B."/>
            <person name="Whiteway M."/>
            <person name="Chibana H."/>
            <person name="Nantel A."/>
            <person name="Magee P.T."/>
        </authorList>
    </citation>
    <scope>GENOME REANNOTATION</scope>
    <source>
        <strain>SC5314 / ATCC MYA-2876</strain>
    </source>
</reference>
<reference key="5">
    <citation type="journal article" date="2013" name="Genome Biol.">
        <title>Assembly of a phased diploid Candida albicans genome facilitates allele-specific measurements and provides a simple model for repeat and indel structure.</title>
        <authorList>
            <person name="Muzzey D."/>
            <person name="Schwartz K."/>
            <person name="Weissman J.S."/>
            <person name="Sherlock G."/>
        </authorList>
    </citation>
    <scope>NUCLEOTIDE SEQUENCE [LARGE SCALE GENOMIC DNA]</scope>
    <scope>GENOME REANNOTATION</scope>
    <source>
        <strain>SC5314 / ATCC MYA-2876</strain>
    </source>
</reference>
<organism>
    <name type="scientific">Candida albicans (strain SC5314 / ATCC MYA-2876)</name>
    <name type="common">Yeast</name>
    <dbReference type="NCBI Taxonomy" id="237561"/>
    <lineage>
        <taxon>Eukaryota</taxon>
        <taxon>Fungi</taxon>
        <taxon>Dikarya</taxon>
        <taxon>Ascomycota</taxon>
        <taxon>Saccharomycotina</taxon>
        <taxon>Pichiomycetes</taxon>
        <taxon>Debaryomycetaceae</taxon>
        <taxon>Candida/Lodderomyces clade</taxon>
        <taxon>Candida</taxon>
    </lineage>
</organism>
<evidence type="ECO:0000250" key="1">
    <source>
        <dbReference type="UniProtKB" id="P39105"/>
    </source>
</evidence>
<evidence type="ECO:0000255" key="2"/>
<evidence type="ECO:0000255" key="3">
    <source>
        <dbReference type="PROSITE-ProRule" id="PRU00555"/>
    </source>
</evidence>
<evidence type="ECO:0000269" key="4">
    <source>
    </source>
</evidence>
<evidence type="ECO:0000303" key="5">
    <source>
    </source>
</evidence>
<evidence type="ECO:0000305" key="6"/>
<gene>
    <name evidence="5" type="primary">PLB1</name>
    <name type="synonym">PLB</name>
    <name type="ordered locus">CAALFM_C601990WA</name>
    <name type="ORF">CaO19.689</name>
</gene>